<gene>
    <name type="ORF">DDB_G0277989</name>
</gene>
<sequence>MNEIIVGEYKIHSLLKSFADKDEERNVYIVLNKSNEKFICKEIIYTQNSNIDNEKRKSEYINLKKFSDTIKYPHLNISKYIEHFIILENQQEKEKIKKQYIITEFYDGGDLSSLKITNKKCFSIKNGDIIYLFLKMLIIFKEFQTVIIHRDIKPDGSIVNDYYLCDLGSSTQVKTINSSTLIGTNQYIAPDVIKRGGYTGTIDIYGLGKTLLLLLNRVQQNQYNKINKILFEMMCSNESTERPTVDQLIEFMVCQYDNISFTEFDDFTHPLSKDCIEYFKNNKLNILKKDVKPIQIKIKIKEKEYRAYGAIQALLRNFYYIDNVISIEDNNNNNNNNNNNNNNNNNNNNNNNNNNNNNNNNNSDGPIEVAEFEWNENTDRLASELLLGHFKTETGGKNYEIANSHIEFVLKSEVLKSLSYHDEIVIDRQATPIYDNFINSDDSQAQIPPTSTKCIHIFSNHKYNFQKFIRDLPYGELTGDVQLKAIFHLILVIFEIAENGPDFMYNALLEKNMGTLFIIPPSSETTPRPPTPTATTTPTPTATTPTTTTATTTKLSQHNFKFLFPFRSYAFSHSSNTKLHIFLNIFGDHTKDGLIVDILKLAKELDKTKLPTVDIILQLIKMIQKEKCKLLETYSNSGLDFYFNNFETLIFNYELKESLTKLIDKNKIIHCVDSLNQILTTRYFYFVENHYKCYAIEPYKSLELISSFNENKNIYIRKLLHYSSFPSMKRFKYIQTYYDKVNNSHYFVFEIPKKLLNTTKKMELTKQSSSTTTKIDRMKIFKNLIVQHLNNIQELKTHLKSIYEYSFNLVISLEDDNKFELYYSNSVSPFSSDGFIRSFYDIGKWVFGNLNNQEEEGDQLVKMKSYFSFLRILSELSWFCNILGSGNVHNSIVYNELNIYYYLKMLLPLLNDIKINVFHYQIQNDIFAKIIIGNTQYNIINLIEPNHIDDPFSMVQYHLYIMELEKIETSDKFTCLRKQFNQRPQKQSKIFEIPNPNNSIDEILIEPTLIVQDINTSFQFFKVNGIIKTIEDFNQEKDYSNIIILRSFLYFLQYLFKNPSKTTLLVLFDIRKIDFDNINSSNDIDNESIPQYLCFDFLYFIKQMYGIDIYFQFEDFLEIISTRPSIVSNIIQSNKKKILNDIICMDIIENDISMKDVFYLLSVDIIKTISPTVNLVIYDKRYYIQKEVGSISKIREWKKFGIISSHPDAVVFLKYGKKDLKSAMLDNGKVNDENYYGIAVEDYMKSNELNILYYLLSKQEEPDFTNIERYYLENDKIYAMFPYVNGSCNLSEIDNLNEMDLLNILYQLCFQLHQLENLGIFHRDVKPENIISLRYGNGGIVVFIVDFGISQYKGKHLENYYSRDGTFGYQAPEIYREELRGDGDIKTQKYKMDVFSLGCTMAFLIKKFNITSTYLNDFIDNMTQPHVCKSFKK</sequence>
<feature type="chain" id="PRO_0000362063" description="Probable serine/threonine-protein kinase DDB_G0277989">
    <location>
        <begin position="1"/>
        <end position="1433"/>
    </location>
</feature>
<feature type="domain" description="Protein kinase 1" evidence="1">
    <location>
        <begin position="1"/>
        <end position="272"/>
    </location>
</feature>
<feature type="domain" description="Protein kinase 2" evidence="1">
    <location>
        <begin position="1177"/>
        <end position="1433"/>
    </location>
</feature>
<feature type="region of interest" description="Disordered" evidence="2">
    <location>
        <begin position="332"/>
        <end position="366"/>
    </location>
</feature>
<feature type="region of interest" description="Disordered" evidence="2">
    <location>
        <begin position="521"/>
        <end position="550"/>
    </location>
</feature>
<feature type="compositionally biased region" description="Low complexity" evidence="2">
    <location>
        <begin position="332"/>
        <end position="362"/>
    </location>
</feature>
<feature type="compositionally biased region" description="Low complexity" evidence="2">
    <location>
        <begin position="533"/>
        <end position="550"/>
    </location>
</feature>
<feature type="active site" description="Proton acceptor" evidence="1">
    <location>
        <position position="151"/>
    </location>
</feature>
<feature type="binding site" evidence="1">
    <location>
        <begin position="1"/>
        <end position="4"/>
    </location>
    <ligand>
        <name>ATP</name>
        <dbReference type="ChEBI" id="CHEBI:30616"/>
    </ligand>
</feature>
<feature type="binding site" evidence="1">
    <location>
        <position position="41"/>
    </location>
    <ligand>
        <name>ATP</name>
        <dbReference type="ChEBI" id="CHEBI:30616"/>
    </ligand>
</feature>
<dbReference type="EC" id="2.7.11.1"/>
<dbReference type="EMBL" id="AAFI02000023">
    <property type="protein sequence ID" value="EAL68167.1"/>
    <property type="molecule type" value="Genomic_DNA"/>
</dbReference>
<dbReference type="RefSeq" id="XP_642057.1">
    <property type="nucleotide sequence ID" value="XM_636965.1"/>
</dbReference>
<dbReference type="SMR" id="Q54YZ5"/>
<dbReference type="FunCoup" id="Q54YZ5">
    <property type="interactions" value="640"/>
</dbReference>
<dbReference type="STRING" id="44689.Q54YZ5"/>
<dbReference type="GlyGen" id="Q54YZ5">
    <property type="glycosylation" value="1 site"/>
</dbReference>
<dbReference type="PaxDb" id="44689-DDB0230037"/>
<dbReference type="EnsemblProtists" id="EAL68167">
    <property type="protein sequence ID" value="EAL68167"/>
    <property type="gene ID" value="DDB_G0277989"/>
</dbReference>
<dbReference type="GeneID" id="8621269"/>
<dbReference type="KEGG" id="ddi:DDB_G0277989"/>
<dbReference type="dictyBase" id="DDB_G0277989"/>
<dbReference type="VEuPathDB" id="AmoebaDB:DDB_G0277989"/>
<dbReference type="eggNOG" id="KOG0581">
    <property type="taxonomic scope" value="Eukaryota"/>
</dbReference>
<dbReference type="eggNOG" id="KOG1027">
    <property type="taxonomic scope" value="Eukaryota"/>
</dbReference>
<dbReference type="HOGENOM" id="CLU_252337_0_0_1"/>
<dbReference type="InParanoid" id="Q54YZ5"/>
<dbReference type="OMA" id="CSNESTE"/>
<dbReference type="PhylomeDB" id="Q54YZ5"/>
<dbReference type="PRO" id="PR:Q54YZ5"/>
<dbReference type="Proteomes" id="UP000002195">
    <property type="component" value="Chromosome 3"/>
</dbReference>
<dbReference type="GO" id="GO:0005524">
    <property type="term" value="F:ATP binding"/>
    <property type="evidence" value="ECO:0007669"/>
    <property type="project" value="UniProtKB-KW"/>
</dbReference>
<dbReference type="GO" id="GO:0106310">
    <property type="term" value="F:protein serine kinase activity"/>
    <property type="evidence" value="ECO:0007669"/>
    <property type="project" value="RHEA"/>
</dbReference>
<dbReference type="GO" id="GO:0004674">
    <property type="term" value="F:protein serine/threonine kinase activity"/>
    <property type="evidence" value="ECO:0000318"/>
    <property type="project" value="GO_Central"/>
</dbReference>
<dbReference type="Gene3D" id="1.10.510.10">
    <property type="entry name" value="Transferase(Phosphotransferase) domain 1"/>
    <property type="match status" value="2"/>
</dbReference>
<dbReference type="InterPro" id="IPR011009">
    <property type="entry name" value="Kinase-like_dom_sf"/>
</dbReference>
<dbReference type="InterPro" id="IPR000719">
    <property type="entry name" value="Prot_kinase_dom"/>
</dbReference>
<dbReference type="PANTHER" id="PTHR24363">
    <property type="entry name" value="SERINE/THREONINE PROTEIN KINASE"/>
    <property type="match status" value="1"/>
</dbReference>
<dbReference type="PANTHER" id="PTHR24363:SF0">
    <property type="entry name" value="SERINE_THREONINE KINASE LIKE DOMAIN CONTAINING 1"/>
    <property type="match status" value="1"/>
</dbReference>
<dbReference type="Pfam" id="PF00069">
    <property type="entry name" value="Pkinase"/>
    <property type="match status" value="2"/>
</dbReference>
<dbReference type="SMART" id="SM00220">
    <property type="entry name" value="S_TKc"/>
    <property type="match status" value="1"/>
</dbReference>
<dbReference type="SUPFAM" id="SSF56112">
    <property type="entry name" value="Protein kinase-like (PK-like)"/>
    <property type="match status" value="2"/>
</dbReference>
<dbReference type="PROSITE" id="PS50011">
    <property type="entry name" value="PROTEIN_KINASE_DOM"/>
    <property type="match status" value="2"/>
</dbReference>
<name>Y7989_DICDI</name>
<organism>
    <name type="scientific">Dictyostelium discoideum</name>
    <name type="common">Social amoeba</name>
    <dbReference type="NCBI Taxonomy" id="44689"/>
    <lineage>
        <taxon>Eukaryota</taxon>
        <taxon>Amoebozoa</taxon>
        <taxon>Evosea</taxon>
        <taxon>Eumycetozoa</taxon>
        <taxon>Dictyostelia</taxon>
        <taxon>Dictyosteliales</taxon>
        <taxon>Dictyosteliaceae</taxon>
        <taxon>Dictyostelium</taxon>
    </lineage>
</organism>
<reference key="1">
    <citation type="journal article" date="2005" name="Nature">
        <title>The genome of the social amoeba Dictyostelium discoideum.</title>
        <authorList>
            <person name="Eichinger L."/>
            <person name="Pachebat J.A."/>
            <person name="Gloeckner G."/>
            <person name="Rajandream M.A."/>
            <person name="Sucgang R."/>
            <person name="Berriman M."/>
            <person name="Song J."/>
            <person name="Olsen R."/>
            <person name="Szafranski K."/>
            <person name="Xu Q."/>
            <person name="Tunggal B."/>
            <person name="Kummerfeld S."/>
            <person name="Madera M."/>
            <person name="Konfortov B.A."/>
            <person name="Rivero F."/>
            <person name="Bankier A.T."/>
            <person name="Lehmann R."/>
            <person name="Hamlin N."/>
            <person name="Davies R."/>
            <person name="Gaudet P."/>
            <person name="Fey P."/>
            <person name="Pilcher K."/>
            <person name="Chen G."/>
            <person name="Saunders D."/>
            <person name="Sodergren E.J."/>
            <person name="Davis P."/>
            <person name="Kerhornou A."/>
            <person name="Nie X."/>
            <person name="Hall N."/>
            <person name="Anjard C."/>
            <person name="Hemphill L."/>
            <person name="Bason N."/>
            <person name="Farbrother P."/>
            <person name="Desany B."/>
            <person name="Just E."/>
            <person name="Morio T."/>
            <person name="Rost R."/>
            <person name="Churcher C.M."/>
            <person name="Cooper J."/>
            <person name="Haydock S."/>
            <person name="van Driessche N."/>
            <person name="Cronin A."/>
            <person name="Goodhead I."/>
            <person name="Muzny D.M."/>
            <person name="Mourier T."/>
            <person name="Pain A."/>
            <person name="Lu M."/>
            <person name="Harper D."/>
            <person name="Lindsay R."/>
            <person name="Hauser H."/>
            <person name="James K.D."/>
            <person name="Quiles M."/>
            <person name="Madan Babu M."/>
            <person name="Saito T."/>
            <person name="Buchrieser C."/>
            <person name="Wardroper A."/>
            <person name="Felder M."/>
            <person name="Thangavelu M."/>
            <person name="Johnson D."/>
            <person name="Knights A."/>
            <person name="Loulseged H."/>
            <person name="Mungall K.L."/>
            <person name="Oliver K."/>
            <person name="Price C."/>
            <person name="Quail M.A."/>
            <person name="Urushihara H."/>
            <person name="Hernandez J."/>
            <person name="Rabbinowitsch E."/>
            <person name="Steffen D."/>
            <person name="Sanders M."/>
            <person name="Ma J."/>
            <person name="Kohara Y."/>
            <person name="Sharp S."/>
            <person name="Simmonds M.N."/>
            <person name="Spiegler S."/>
            <person name="Tivey A."/>
            <person name="Sugano S."/>
            <person name="White B."/>
            <person name="Walker D."/>
            <person name="Woodward J.R."/>
            <person name="Winckler T."/>
            <person name="Tanaka Y."/>
            <person name="Shaulsky G."/>
            <person name="Schleicher M."/>
            <person name="Weinstock G.M."/>
            <person name="Rosenthal A."/>
            <person name="Cox E.C."/>
            <person name="Chisholm R.L."/>
            <person name="Gibbs R.A."/>
            <person name="Loomis W.F."/>
            <person name="Platzer M."/>
            <person name="Kay R.R."/>
            <person name="Williams J.G."/>
            <person name="Dear P.H."/>
            <person name="Noegel A.A."/>
            <person name="Barrell B.G."/>
            <person name="Kuspa A."/>
        </authorList>
    </citation>
    <scope>NUCLEOTIDE SEQUENCE [LARGE SCALE GENOMIC DNA]</scope>
    <source>
        <strain>AX4</strain>
    </source>
</reference>
<proteinExistence type="inferred from homology"/>
<protein>
    <recommendedName>
        <fullName>Probable serine/threonine-protein kinase DDB_G0277989</fullName>
        <ecNumber>2.7.11.1</ecNumber>
    </recommendedName>
</protein>
<accession>Q54YZ5</accession>
<comment type="catalytic activity">
    <reaction>
        <text>L-seryl-[protein] + ATP = O-phospho-L-seryl-[protein] + ADP + H(+)</text>
        <dbReference type="Rhea" id="RHEA:17989"/>
        <dbReference type="Rhea" id="RHEA-COMP:9863"/>
        <dbReference type="Rhea" id="RHEA-COMP:11604"/>
        <dbReference type="ChEBI" id="CHEBI:15378"/>
        <dbReference type="ChEBI" id="CHEBI:29999"/>
        <dbReference type="ChEBI" id="CHEBI:30616"/>
        <dbReference type="ChEBI" id="CHEBI:83421"/>
        <dbReference type="ChEBI" id="CHEBI:456216"/>
        <dbReference type="EC" id="2.7.11.1"/>
    </reaction>
</comment>
<comment type="catalytic activity">
    <reaction>
        <text>L-threonyl-[protein] + ATP = O-phospho-L-threonyl-[protein] + ADP + H(+)</text>
        <dbReference type="Rhea" id="RHEA:46608"/>
        <dbReference type="Rhea" id="RHEA-COMP:11060"/>
        <dbReference type="Rhea" id="RHEA-COMP:11605"/>
        <dbReference type="ChEBI" id="CHEBI:15378"/>
        <dbReference type="ChEBI" id="CHEBI:30013"/>
        <dbReference type="ChEBI" id="CHEBI:30616"/>
        <dbReference type="ChEBI" id="CHEBI:61977"/>
        <dbReference type="ChEBI" id="CHEBI:456216"/>
        <dbReference type="EC" id="2.7.11.1"/>
    </reaction>
</comment>
<comment type="domain">
    <text>The protein kinase domain 2 is predicted to be catalytically inactive.</text>
</comment>
<comment type="similarity">
    <text evidence="1">Belongs to the protein kinase superfamily. Ser/Thr protein kinase family.</text>
</comment>
<keyword id="KW-0067">ATP-binding</keyword>
<keyword id="KW-0418">Kinase</keyword>
<keyword id="KW-0547">Nucleotide-binding</keyword>
<keyword id="KW-1185">Reference proteome</keyword>
<keyword id="KW-0677">Repeat</keyword>
<keyword id="KW-0723">Serine/threonine-protein kinase</keyword>
<keyword id="KW-0808">Transferase</keyword>
<evidence type="ECO:0000255" key="1">
    <source>
        <dbReference type="PROSITE-ProRule" id="PRU00159"/>
    </source>
</evidence>
<evidence type="ECO:0000256" key="2">
    <source>
        <dbReference type="SAM" id="MobiDB-lite"/>
    </source>
</evidence>